<accession>P31198</accession>
<reference key="1">
    <citation type="journal article" date="1994" name="Mol. Phylogenet. Evol.">
        <title>Molecular phylogeny of families related to Celastrales based on rbcL 5' flanking sequences.</title>
        <authorList>
            <person name="Savolainen V."/>
            <person name="Manen J.F."/>
            <person name="Douzery E.J.P."/>
            <person name="Spichiger R."/>
        </authorList>
    </citation>
    <scope>NUCLEOTIDE SEQUENCE [GENOMIC DNA]</scope>
    <source>
        <strain>Sample RCA4</strain>
    </source>
</reference>
<geneLocation type="chloroplast"/>
<name>RBL_RHACA</name>
<organism>
    <name type="scientific">Rhamnus cathartica</name>
    <name type="common">Common buckthorn</name>
    <dbReference type="NCBI Taxonomy" id="3610"/>
    <lineage>
        <taxon>Eukaryota</taxon>
        <taxon>Viridiplantae</taxon>
        <taxon>Streptophyta</taxon>
        <taxon>Embryophyta</taxon>
        <taxon>Tracheophyta</taxon>
        <taxon>Spermatophyta</taxon>
        <taxon>Magnoliopsida</taxon>
        <taxon>eudicotyledons</taxon>
        <taxon>Gunneridae</taxon>
        <taxon>Pentapetalae</taxon>
        <taxon>rosids</taxon>
        <taxon>fabids</taxon>
        <taxon>Rosales</taxon>
        <taxon>Rhamnaceae</taxon>
        <taxon>rhamnoid group</taxon>
        <taxon>Rhamneae</taxon>
        <taxon>Rhamnus</taxon>
    </lineage>
</organism>
<gene>
    <name type="primary">rbcL</name>
</gene>
<protein>
    <recommendedName>
        <fullName>Ribulose bisphosphate carboxylase large chain</fullName>
        <shortName>RuBisCO large subunit</shortName>
        <ecNumber>4.1.1.39</ecNumber>
    </recommendedName>
</protein>
<keyword id="KW-0007">Acetylation</keyword>
<keyword id="KW-0113">Calvin cycle</keyword>
<keyword id="KW-0120">Carbon dioxide fixation</keyword>
<keyword id="KW-0150">Chloroplast</keyword>
<keyword id="KW-0456">Lyase</keyword>
<keyword id="KW-0488">Methylation</keyword>
<keyword id="KW-0503">Monooxygenase</keyword>
<keyword id="KW-0560">Oxidoreductase</keyword>
<keyword id="KW-0601">Photorespiration</keyword>
<keyword id="KW-0602">Photosynthesis</keyword>
<keyword id="KW-0934">Plastid</keyword>
<feature type="propeptide" id="PRO_0000031385" evidence="1">
    <location>
        <begin position="1"/>
        <end position="2"/>
    </location>
</feature>
<feature type="chain" id="PRO_0000031386" description="Ribulose bisphosphate carboxylase large chain">
    <location>
        <begin position="3"/>
        <end position="54" status="greater than"/>
    </location>
</feature>
<feature type="modified residue" description="N-acetylproline" evidence="1">
    <location>
        <position position="3"/>
    </location>
</feature>
<feature type="modified residue" description="N6,N6,N6-trimethyllysine" evidence="1">
    <location>
        <position position="14"/>
    </location>
</feature>
<feature type="non-terminal residue">
    <location>
        <position position="54"/>
    </location>
</feature>
<dbReference type="EC" id="4.1.1.39"/>
<dbReference type="EMBL" id="X69752">
    <property type="protein sequence ID" value="CAA49407.1"/>
    <property type="molecule type" value="Genomic_DNA"/>
</dbReference>
<dbReference type="PIR" id="S31537">
    <property type="entry name" value="S31537"/>
</dbReference>
<dbReference type="SMR" id="P31198"/>
<dbReference type="GO" id="GO:0009507">
    <property type="term" value="C:chloroplast"/>
    <property type="evidence" value="ECO:0007669"/>
    <property type="project" value="UniProtKB-SubCell"/>
</dbReference>
<dbReference type="GO" id="GO:0004497">
    <property type="term" value="F:monooxygenase activity"/>
    <property type="evidence" value="ECO:0007669"/>
    <property type="project" value="UniProtKB-KW"/>
</dbReference>
<dbReference type="GO" id="GO:0016984">
    <property type="term" value="F:ribulose-bisphosphate carboxylase activity"/>
    <property type="evidence" value="ECO:0007669"/>
    <property type="project" value="UniProtKB-EC"/>
</dbReference>
<dbReference type="GO" id="GO:0009853">
    <property type="term" value="P:photorespiration"/>
    <property type="evidence" value="ECO:0007669"/>
    <property type="project" value="UniProtKB-KW"/>
</dbReference>
<dbReference type="GO" id="GO:0019253">
    <property type="term" value="P:reductive pentose-phosphate cycle"/>
    <property type="evidence" value="ECO:0007669"/>
    <property type="project" value="UniProtKB-KW"/>
</dbReference>
<dbReference type="Gene3D" id="3.30.70.150">
    <property type="entry name" value="RuBisCO large subunit, N-terminal domain"/>
    <property type="match status" value="1"/>
</dbReference>
<dbReference type="InterPro" id="IPR033966">
    <property type="entry name" value="RuBisCO"/>
</dbReference>
<dbReference type="InterPro" id="IPR017443">
    <property type="entry name" value="RuBisCO_lsu_fd_N"/>
</dbReference>
<dbReference type="InterPro" id="IPR036422">
    <property type="entry name" value="RuBisCO_lsu_N_sf"/>
</dbReference>
<dbReference type="PANTHER" id="PTHR42704">
    <property type="entry name" value="RIBULOSE BISPHOSPHATE CARBOXYLASE"/>
    <property type="match status" value="1"/>
</dbReference>
<dbReference type="PANTHER" id="PTHR42704:SF15">
    <property type="entry name" value="RIBULOSE BISPHOSPHATE CARBOXYLASE LARGE CHAIN"/>
    <property type="match status" value="1"/>
</dbReference>
<dbReference type="Pfam" id="PF02788">
    <property type="entry name" value="RuBisCO_large_N"/>
    <property type="match status" value="1"/>
</dbReference>
<dbReference type="SUPFAM" id="SSF54966">
    <property type="entry name" value="RuBisCO, large subunit, small (N-terminal) domain"/>
    <property type="match status" value="1"/>
</dbReference>
<proteinExistence type="inferred from homology"/>
<sequence length="54" mass="5925">MSPQTETKASVGFKAGVKDYKLTYYTPEYETKDTDILAAFRVTPQPGVPPEEAG</sequence>
<comment type="function">
    <text evidence="1">RuBisCO catalyzes two reactions: the carboxylation of D-ribulose 1,5-bisphosphate, the primary event in carbon dioxide fixation, as well as the oxidative fragmentation of the pentose substrate in the photorespiration process. Both reactions occur simultaneously and in competition at the same active site (By similarity).</text>
</comment>
<comment type="catalytic activity">
    <reaction>
        <text>2 (2R)-3-phosphoglycerate + 2 H(+) = D-ribulose 1,5-bisphosphate + CO2 + H2O</text>
        <dbReference type="Rhea" id="RHEA:23124"/>
        <dbReference type="ChEBI" id="CHEBI:15377"/>
        <dbReference type="ChEBI" id="CHEBI:15378"/>
        <dbReference type="ChEBI" id="CHEBI:16526"/>
        <dbReference type="ChEBI" id="CHEBI:57870"/>
        <dbReference type="ChEBI" id="CHEBI:58272"/>
        <dbReference type="EC" id="4.1.1.39"/>
    </reaction>
</comment>
<comment type="catalytic activity">
    <reaction>
        <text>D-ribulose 1,5-bisphosphate + O2 = 2-phosphoglycolate + (2R)-3-phosphoglycerate + 2 H(+)</text>
        <dbReference type="Rhea" id="RHEA:36631"/>
        <dbReference type="ChEBI" id="CHEBI:15378"/>
        <dbReference type="ChEBI" id="CHEBI:15379"/>
        <dbReference type="ChEBI" id="CHEBI:57870"/>
        <dbReference type="ChEBI" id="CHEBI:58033"/>
        <dbReference type="ChEBI" id="CHEBI:58272"/>
    </reaction>
</comment>
<comment type="subunit">
    <text evidence="1">Heterohexadecamer of 8 large chains and 8 small chains.</text>
</comment>
<comment type="subcellular location">
    <subcellularLocation>
        <location>Plastid</location>
        <location>Chloroplast</location>
    </subcellularLocation>
</comment>
<comment type="miscellaneous">
    <text evidence="1">The basic functional RuBisCO is composed of a large chain homodimer in a 'head-to-tail' conformation. In form I RuBisCO this homodimer is arranged in a barrel-like tetramer with the small subunits forming a tetrameric 'cap' on each end of the 'barrel' (By similarity).</text>
</comment>
<comment type="similarity">
    <text evidence="2">Belongs to the RuBisCO large chain family. Type I subfamily.</text>
</comment>
<evidence type="ECO:0000250" key="1"/>
<evidence type="ECO:0000305" key="2"/>